<dbReference type="EMBL" id="AE000520">
    <property type="protein sequence ID" value="AAC65667.1"/>
    <property type="molecule type" value="Genomic_DNA"/>
</dbReference>
<dbReference type="PIR" id="G71293">
    <property type="entry name" value="G71293"/>
</dbReference>
<dbReference type="RefSeq" id="WP_010882143.1">
    <property type="nucleotide sequence ID" value="NC_021490.2"/>
</dbReference>
<dbReference type="IntAct" id="O83696">
    <property type="interactions" value="1"/>
</dbReference>
<dbReference type="STRING" id="243276.TP_0698"/>
<dbReference type="EnsemblBacteria" id="AAC65667">
    <property type="protein sequence ID" value="AAC65667"/>
    <property type="gene ID" value="TP_0698"/>
</dbReference>
<dbReference type="KEGG" id="tpa:TP_0698"/>
<dbReference type="KEGG" id="tpw:TPANIC_0698"/>
<dbReference type="HOGENOM" id="CLU_1488386_0_0_12"/>
<dbReference type="Proteomes" id="UP000000811">
    <property type="component" value="Chromosome"/>
</dbReference>
<dbReference type="InterPro" id="IPR024471">
    <property type="entry name" value="DUF2715"/>
</dbReference>
<dbReference type="Pfam" id="PF10895">
    <property type="entry name" value="DUF2715"/>
    <property type="match status" value="1"/>
</dbReference>
<protein>
    <recommendedName>
        <fullName>Uncharacterized protein TP_0698</fullName>
    </recommendedName>
</protein>
<organism>
    <name type="scientific">Treponema pallidum (strain Nichols)</name>
    <dbReference type="NCBI Taxonomy" id="243276"/>
    <lineage>
        <taxon>Bacteria</taxon>
        <taxon>Pseudomonadati</taxon>
        <taxon>Spirochaetota</taxon>
        <taxon>Spirochaetia</taxon>
        <taxon>Spirochaetales</taxon>
        <taxon>Treponemataceae</taxon>
        <taxon>Treponema</taxon>
    </lineage>
</organism>
<gene>
    <name type="ordered locus">TP_0698</name>
</gene>
<keyword id="KW-1185">Reference proteome</keyword>
<keyword id="KW-0732">Signal</keyword>
<proteinExistence type="inferred from homology"/>
<reference key="1">
    <citation type="journal article" date="1998" name="Science">
        <title>Complete genome sequence of Treponema pallidum, the syphilis spirochete.</title>
        <authorList>
            <person name="Fraser C.M."/>
            <person name="Norris S.J."/>
            <person name="Weinstock G.M."/>
            <person name="White O."/>
            <person name="Sutton G.G."/>
            <person name="Dodson R.J."/>
            <person name="Gwinn M.L."/>
            <person name="Hickey E.K."/>
            <person name="Clayton R.A."/>
            <person name="Ketchum K.A."/>
            <person name="Sodergren E."/>
            <person name="Hardham J.M."/>
            <person name="McLeod M.P."/>
            <person name="Salzberg S.L."/>
            <person name="Peterson J.D."/>
            <person name="Khalak H.G."/>
            <person name="Richardson D.L."/>
            <person name="Howell J.K."/>
            <person name="Chidambaram M."/>
            <person name="Utterback T.R."/>
            <person name="McDonald L.A."/>
            <person name="Artiach P."/>
            <person name="Bowman C."/>
            <person name="Cotton M.D."/>
            <person name="Fujii C."/>
            <person name="Garland S.A."/>
            <person name="Hatch B."/>
            <person name="Horst K."/>
            <person name="Roberts K.M."/>
            <person name="Sandusky M."/>
            <person name="Weidman J.F."/>
            <person name="Smith H.O."/>
            <person name="Venter J.C."/>
        </authorList>
    </citation>
    <scope>NUCLEOTIDE SEQUENCE [LARGE SCALE GENOMIC DNA]</scope>
    <source>
        <strain>Nichols</strain>
    </source>
</reference>
<accession>O83696</accession>
<evidence type="ECO:0000255" key="1"/>
<sequence length="181" mass="18894">MRRLLACSAGVLCFSQLGALELFLSPKIGITSVYQFGSNGGSDGTSSGKGVSFDRLIGRVDLGLILVNGLTISASAESSLTNVFVRAQALIGYAVRVGGLRAIVSSGVNICGDSCATSEGKSSAWYSKLLYSVPLNLEVQYYLTSFAGVAVAASTAVGVRDFNFKEFTLPLSLTIGPTFRV</sequence>
<feature type="signal peptide" evidence="1">
    <location>
        <begin position="1"/>
        <end position="19"/>
    </location>
</feature>
<feature type="chain" id="PRO_0000014255" description="Uncharacterized protein TP_0698">
    <location>
        <begin position="20"/>
        <end position="181"/>
    </location>
</feature>
<name>Y698_TREPA</name>